<reference key="1">
    <citation type="journal article" date="1998" name="Science">
        <title>Genome sequence of the nematode C. elegans: a platform for investigating biology.</title>
        <authorList>
            <consortium name="The C. elegans sequencing consortium"/>
        </authorList>
    </citation>
    <scope>NUCLEOTIDE SEQUENCE [LARGE SCALE GENOMIC DNA]</scope>
    <source>
        <strain>Bristol N2</strain>
    </source>
</reference>
<gene>
    <name type="primary">sra-28</name>
    <name type="ORF">F18C5.6</name>
</gene>
<evidence type="ECO:0000255" key="1"/>
<evidence type="ECO:0000305" key="2"/>
<organism>
    <name type="scientific">Caenorhabditis elegans</name>
    <dbReference type="NCBI Taxonomy" id="6239"/>
    <lineage>
        <taxon>Eukaryota</taxon>
        <taxon>Metazoa</taxon>
        <taxon>Ecdysozoa</taxon>
        <taxon>Nematoda</taxon>
        <taxon>Chromadorea</taxon>
        <taxon>Rhabditida</taxon>
        <taxon>Rhabditina</taxon>
        <taxon>Rhabditomorpha</taxon>
        <taxon>Rhabditoidea</taxon>
        <taxon>Rhabditidae</taxon>
        <taxon>Peloderinae</taxon>
        <taxon>Caenorhabditis</taxon>
    </lineage>
</organism>
<proteinExistence type="inferred from homology"/>
<sequence>MSSECARSDVHNVLTSDSMKFNHCFIISIIIISFFTTTKSVRVLLKQNLLPTCTRNLLFSAIINGIIHQCVTAVIRLRAFYHAIVYASDPCAILFQSSQCFFDGNLYYYTNLFSSFCCFSLFLDRLFSFKPRSSYHNHQTLASIVLILSQIVLPIGPLYWVFYDAFYTSYVLMCTYPPPMSVMKLHEVNNIRICVLIVLLFFAIFLYIHNKIREKRMVHNVYNINSRYKSYENYLATKSVCIVIFSQILCVGPTSSITSVFIRFRDSIPLEWFHLIISYLTGLTYSNFLLPLIILYQDKQIAKKRRIMIQRLQNKNETSFDHFDTLKSLWGKKTGNQETLF</sequence>
<accession>Q19550</accession>
<name>SRA28_CAEEL</name>
<keyword id="KW-0472">Membrane</keyword>
<keyword id="KW-1185">Reference proteome</keyword>
<keyword id="KW-0812">Transmembrane</keyword>
<keyword id="KW-1133">Transmembrane helix</keyword>
<comment type="subcellular location">
    <subcellularLocation>
        <location evidence="2">Membrane</location>
        <topology evidence="2">Multi-pass membrane protein</topology>
    </subcellularLocation>
</comment>
<comment type="similarity">
    <text evidence="2">Belongs to the nematode receptor-like protein sra family.</text>
</comment>
<dbReference type="EMBL" id="FO080970">
    <property type="protein sequence ID" value="CCD68197.1"/>
    <property type="molecule type" value="Genomic_DNA"/>
</dbReference>
<dbReference type="PIR" id="T16091">
    <property type="entry name" value="T16091"/>
</dbReference>
<dbReference type="RefSeq" id="NP_495329.1">
    <property type="nucleotide sequence ID" value="NM_062928.2"/>
</dbReference>
<dbReference type="FunCoup" id="Q19550">
    <property type="interactions" value="3"/>
</dbReference>
<dbReference type="STRING" id="6239.F18C5.6.1"/>
<dbReference type="PaxDb" id="6239-F18C5.6"/>
<dbReference type="EnsemblMetazoa" id="F18C5.6.1">
    <property type="protein sequence ID" value="F18C5.6.1"/>
    <property type="gene ID" value="WBGene00005054"/>
</dbReference>
<dbReference type="GeneID" id="184634"/>
<dbReference type="KEGG" id="cel:CELE_F18C5.6"/>
<dbReference type="UCSC" id="F18C5.6">
    <property type="organism name" value="c. elegans"/>
</dbReference>
<dbReference type="AGR" id="WB:WBGene00005054"/>
<dbReference type="CTD" id="184634"/>
<dbReference type="WormBase" id="F18C5.6">
    <property type="protein sequence ID" value="CE02655"/>
    <property type="gene ID" value="WBGene00005054"/>
    <property type="gene designation" value="sra-28"/>
</dbReference>
<dbReference type="GeneTree" id="ENSGT00970000195862"/>
<dbReference type="HOGENOM" id="CLU_070413_0_0_1"/>
<dbReference type="InParanoid" id="Q19550"/>
<dbReference type="OMA" id="VNNIRIC"/>
<dbReference type="OrthoDB" id="5789178at2759"/>
<dbReference type="PhylomeDB" id="Q19550"/>
<dbReference type="PRO" id="PR:Q19550"/>
<dbReference type="Proteomes" id="UP000001940">
    <property type="component" value="Chromosome II"/>
</dbReference>
<dbReference type="GO" id="GO:0016020">
    <property type="term" value="C:membrane"/>
    <property type="evidence" value="ECO:0007669"/>
    <property type="project" value="UniProtKB-SubCell"/>
</dbReference>
<dbReference type="GO" id="GO:0004930">
    <property type="term" value="F:G protein-coupled receptor activity"/>
    <property type="evidence" value="ECO:0007669"/>
    <property type="project" value="InterPro"/>
</dbReference>
<dbReference type="GO" id="GO:0007606">
    <property type="term" value="P:sensory perception of chemical stimulus"/>
    <property type="evidence" value="ECO:0007669"/>
    <property type="project" value="InterPro"/>
</dbReference>
<dbReference type="InterPro" id="IPR000344">
    <property type="entry name" value="7TM_GPCR_serpentine_rcpt_Sra"/>
</dbReference>
<dbReference type="PANTHER" id="PTHR31582:SF1">
    <property type="entry name" value="SERPENTINE RECEPTOR CLASS ALPHA-28-RELATED"/>
    <property type="match status" value="1"/>
</dbReference>
<dbReference type="PANTHER" id="PTHR31582">
    <property type="entry name" value="SERPENTINE RECEPTOR, CLASS A (ALPHA)-RELATED-RELATED"/>
    <property type="match status" value="1"/>
</dbReference>
<dbReference type="Pfam" id="PF02117">
    <property type="entry name" value="7TM_GPCR_Sra"/>
    <property type="match status" value="1"/>
</dbReference>
<feature type="chain" id="PRO_0000104489" description="Serpentine receptor class alpha-28">
    <location>
        <begin position="1"/>
        <end position="341"/>
    </location>
</feature>
<feature type="transmembrane region" description="Helical" evidence="1">
    <location>
        <begin position="25"/>
        <end position="45"/>
    </location>
</feature>
<feature type="transmembrane region" description="Helical" evidence="1">
    <location>
        <begin position="57"/>
        <end position="77"/>
    </location>
</feature>
<feature type="transmembrane region" description="Helical" evidence="1">
    <location>
        <begin position="107"/>
        <end position="129"/>
    </location>
</feature>
<feature type="transmembrane region" description="Helical" evidence="1">
    <location>
        <begin position="142"/>
        <end position="162"/>
    </location>
</feature>
<feature type="transmembrane region" description="Helical" evidence="1">
    <location>
        <begin position="188"/>
        <end position="208"/>
    </location>
</feature>
<feature type="transmembrane region" description="Helical" evidence="1">
    <location>
        <begin position="242"/>
        <end position="262"/>
    </location>
</feature>
<feature type="transmembrane region" description="Helical" evidence="1">
    <location>
        <begin position="275"/>
        <end position="295"/>
    </location>
</feature>
<protein>
    <recommendedName>
        <fullName>Serpentine receptor class alpha-28</fullName>
        <shortName>Protein sra-28</shortName>
    </recommendedName>
</protein>